<proteinExistence type="inferred from homology"/>
<gene>
    <name evidence="2" type="primary">rpsG</name>
    <name type="ordered locus">ML1879</name>
</gene>
<feature type="initiator methionine" description="Removed" evidence="1">
    <location>
        <position position="1"/>
    </location>
</feature>
<feature type="chain" id="PRO_0000124298" description="Small ribosomal subunit protein uS7">
    <location>
        <begin position="2"/>
        <end position="156"/>
    </location>
</feature>
<evidence type="ECO:0000250" key="1"/>
<evidence type="ECO:0000255" key="2">
    <source>
        <dbReference type="HAMAP-Rule" id="MF_00480"/>
    </source>
</evidence>
<evidence type="ECO:0000305" key="3"/>
<protein>
    <recommendedName>
        <fullName evidence="2">Small ribosomal subunit protein uS7</fullName>
    </recommendedName>
    <alternativeName>
        <fullName evidence="3">30S ribosomal protein S7</fullName>
    </alternativeName>
</protein>
<keyword id="KW-1185">Reference proteome</keyword>
<keyword id="KW-0687">Ribonucleoprotein</keyword>
<keyword id="KW-0689">Ribosomal protein</keyword>
<keyword id="KW-0694">RNA-binding</keyword>
<keyword id="KW-0699">rRNA-binding</keyword>
<keyword id="KW-0820">tRNA-binding</keyword>
<comment type="function">
    <text evidence="2">One of the primary rRNA binding proteins, it binds directly to 16S rRNA where it nucleates assembly of the head domain of the 30S subunit. Is located at the subunit interface close to the decoding center, probably blocks exit of the E-site tRNA.</text>
</comment>
<comment type="subunit">
    <text evidence="2">Part of the 30S ribosomal subunit. Contacts proteins S9 and S11.</text>
</comment>
<comment type="similarity">
    <text evidence="2">Belongs to the universal ribosomal protein uS7 family.</text>
</comment>
<organism>
    <name type="scientific">Mycobacterium leprae (strain TN)</name>
    <dbReference type="NCBI Taxonomy" id="272631"/>
    <lineage>
        <taxon>Bacteria</taxon>
        <taxon>Bacillati</taxon>
        <taxon>Actinomycetota</taxon>
        <taxon>Actinomycetes</taxon>
        <taxon>Mycobacteriales</taxon>
        <taxon>Mycobacteriaceae</taxon>
        <taxon>Mycobacterium</taxon>
    </lineage>
</organism>
<reference key="1">
    <citation type="journal article" date="1993" name="Mol. Microbiol.">
        <title>Nucleotide sequence of the first cosmid from the Mycobacterium leprae genome project: structure and function of the Rif-Str regions.</title>
        <authorList>
            <person name="Honore N.T."/>
            <person name="Bergh S."/>
            <person name="Chanteau S."/>
            <person name="Doucet-Populaire F."/>
            <person name="Eiglmeier K."/>
            <person name="Garnier T."/>
            <person name="Georges C."/>
            <person name="Launois P."/>
            <person name="Limpaiboon T."/>
            <person name="Newton S."/>
            <person name="Niang K."/>
            <person name="del Portillo P."/>
            <person name="Ramesh G.R."/>
            <person name="Reddi P."/>
            <person name="Ridel P.R."/>
            <person name="Sittisombut N."/>
            <person name="Wu-Hunter S."/>
            <person name="Cole S.T."/>
        </authorList>
    </citation>
    <scope>NUCLEOTIDE SEQUENCE [GENOMIC DNA]</scope>
</reference>
<reference key="2">
    <citation type="journal article" date="2001" name="Nature">
        <title>Massive gene decay in the leprosy bacillus.</title>
        <authorList>
            <person name="Cole S.T."/>
            <person name="Eiglmeier K."/>
            <person name="Parkhill J."/>
            <person name="James K.D."/>
            <person name="Thomson N.R."/>
            <person name="Wheeler P.R."/>
            <person name="Honore N."/>
            <person name="Garnier T."/>
            <person name="Churcher C.M."/>
            <person name="Harris D.E."/>
            <person name="Mungall K.L."/>
            <person name="Basham D."/>
            <person name="Brown D."/>
            <person name="Chillingworth T."/>
            <person name="Connor R."/>
            <person name="Davies R.M."/>
            <person name="Devlin K."/>
            <person name="Duthoy S."/>
            <person name="Feltwell T."/>
            <person name="Fraser A."/>
            <person name="Hamlin N."/>
            <person name="Holroyd S."/>
            <person name="Hornsby T."/>
            <person name="Jagels K."/>
            <person name="Lacroix C."/>
            <person name="Maclean J."/>
            <person name="Moule S."/>
            <person name="Murphy L.D."/>
            <person name="Oliver K."/>
            <person name="Quail M.A."/>
            <person name="Rajandream M.A."/>
            <person name="Rutherford K.M."/>
            <person name="Rutter S."/>
            <person name="Seeger K."/>
            <person name="Simon S."/>
            <person name="Simmonds M."/>
            <person name="Skelton J."/>
            <person name="Squares R."/>
            <person name="Squares S."/>
            <person name="Stevens K."/>
            <person name="Taylor K."/>
            <person name="Whitehead S."/>
            <person name="Woodward J.R."/>
            <person name="Barrell B.G."/>
        </authorList>
    </citation>
    <scope>NUCLEOTIDE SEQUENCE [LARGE SCALE GENOMIC DNA]</scope>
    <source>
        <strain>TN</strain>
    </source>
</reference>
<reference key="3">
    <citation type="submission" date="1995-03" db="EMBL/GenBank/DDBJ databases">
        <authorList>
            <person name="Silbak F."/>
            <person name="Bercovier H."/>
        </authorList>
    </citation>
    <scope>NUCLEOTIDE SEQUENCE [GENOMIC DNA] OF 1-13</scope>
</reference>
<name>RS7_MYCLE</name>
<sequence>MPRKGPAPKRPLVKHPVYGSQLVTQLVNKILLKGKKSLAERIVYGALEHARDKTGTDPVITLKRALDNVKPALEVRSRRVGGATYQVPVEVRPDRSTTLALRWLVGFSRQRREKTMIERLANEILDASNGLGASVKRREDTHKMAEANRAFAHYRW</sequence>
<accession>P30764</accession>
<dbReference type="EMBL" id="Z14314">
    <property type="protein sequence ID" value="CAA78672.1"/>
    <property type="molecule type" value="Genomic_DNA"/>
</dbReference>
<dbReference type="EMBL" id="AL583923">
    <property type="protein sequence ID" value="CAC30833.1"/>
    <property type="molecule type" value="Genomic_DNA"/>
</dbReference>
<dbReference type="EMBL" id="L40409">
    <property type="protein sequence ID" value="AAA63910.1"/>
    <property type="molecule type" value="Genomic_DNA"/>
</dbReference>
<dbReference type="PIR" id="A87144">
    <property type="entry name" value="A87144"/>
</dbReference>
<dbReference type="PIR" id="S31149">
    <property type="entry name" value="S31149"/>
</dbReference>
<dbReference type="SMR" id="P30764"/>
<dbReference type="STRING" id="272631.gene:17575727"/>
<dbReference type="KEGG" id="mle:ML1879"/>
<dbReference type="Leproma" id="ML1879"/>
<dbReference type="eggNOG" id="COG0049">
    <property type="taxonomic scope" value="Bacteria"/>
</dbReference>
<dbReference type="HOGENOM" id="CLU_072226_1_1_11"/>
<dbReference type="Proteomes" id="UP000000806">
    <property type="component" value="Chromosome"/>
</dbReference>
<dbReference type="GO" id="GO:0015935">
    <property type="term" value="C:small ribosomal subunit"/>
    <property type="evidence" value="ECO:0007669"/>
    <property type="project" value="InterPro"/>
</dbReference>
<dbReference type="GO" id="GO:0019843">
    <property type="term" value="F:rRNA binding"/>
    <property type="evidence" value="ECO:0007669"/>
    <property type="project" value="UniProtKB-UniRule"/>
</dbReference>
<dbReference type="GO" id="GO:0003735">
    <property type="term" value="F:structural constituent of ribosome"/>
    <property type="evidence" value="ECO:0007669"/>
    <property type="project" value="InterPro"/>
</dbReference>
<dbReference type="GO" id="GO:0000049">
    <property type="term" value="F:tRNA binding"/>
    <property type="evidence" value="ECO:0007669"/>
    <property type="project" value="UniProtKB-UniRule"/>
</dbReference>
<dbReference type="GO" id="GO:0006412">
    <property type="term" value="P:translation"/>
    <property type="evidence" value="ECO:0007669"/>
    <property type="project" value="UniProtKB-UniRule"/>
</dbReference>
<dbReference type="CDD" id="cd14869">
    <property type="entry name" value="uS7_Bacteria"/>
    <property type="match status" value="1"/>
</dbReference>
<dbReference type="FunFam" id="1.10.455.10:FF:000001">
    <property type="entry name" value="30S ribosomal protein S7"/>
    <property type="match status" value="1"/>
</dbReference>
<dbReference type="Gene3D" id="1.10.455.10">
    <property type="entry name" value="Ribosomal protein S7 domain"/>
    <property type="match status" value="1"/>
</dbReference>
<dbReference type="HAMAP" id="MF_00480_B">
    <property type="entry name" value="Ribosomal_uS7_B"/>
    <property type="match status" value="1"/>
</dbReference>
<dbReference type="InterPro" id="IPR000235">
    <property type="entry name" value="Ribosomal_uS7"/>
</dbReference>
<dbReference type="InterPro" id="IPR005717">
    <property type="entry name" value="Ribosomal_uS7_bac/org-type"/>
</dbReference>
<dbReference type="InterPro" id="IPR020606">
    <property type="entry name" value="Ribosomal_uS7_CS"/>
</dbReference>
<dbReference type="InterPro" id="IPR023798">
    <property type="entry name" value="Ribosomal_uS7_dom"/>
</dbReference>
<dbReference type="InterPro" id="IPR036823">
    <property type="entry name" value="Ribosomal_uS7_dom_sf"/>
</dbReference>
<dbReference type="NCBIfam" id="TIGR01029">
    <property type="entry name" value="rpsG_bact"/>
    <property type="match status" value="1"/>
</dbReference>
<dbReference type="PANTHER" id="PTHR11205">
    <property type="entry name" value="RIBOSOMAL PROTEIN S7"/>
    <property type="match status" value="1"/>
</dbReference>
<dbReference type="Pfam" id="PF00177">
    <property type="entry name" value="Ribosomal_S7"/>
    <property type="match status" value="1"/>
</dbReference>
<dbReference type="PIRSF" id="PIRSF002122">
    <property type="entry name" value="RPS7p_RPS7a_RPS5e_RPS7o"/>
    <property type="match status" value="1"/>
</dbReference>
<dbReference type="SUPFAM" id="SSF47973">
    <property type="entry name" value="Ribosomal protein S7"/>
    <property type="match status" value="1"/>
</dbReference>
<dbReference type="PROSITE" id="PS00052">
    <property type="entry name" value="RIBOSOMAL_S7"/>
    <property type="match status" value="1"/>
</dbReference>